<keyword id="KW-0997">Cell inner membrane</keyword>
<keyword id="KW-1003">Cell membrane</keyword>
<keyword id="KW-0472">Membrane</keyword>
<keyword id="KW-0812">Transmembrane</keyword>
<keyword id="KW-1133">Transmembrane helix</keyword>
<reference key="1">
    <citation type="journal article" date="2003" name="Genome Res.">
        <title>Comparative genome analysis of Vibrio vulnificus, a marine pathogen.</title>
        <authorList>
            <person name="Chen C.-Y."/>
            <person name="Wu K.-M."/>
            <person name="Chang Y.-C."/>
            <person name="Chang C.-H."/>
            <person name="Tsai H.-C."/>
            <person name="Liao T.-L."/>
            <person name="Liu Y.-M."/>
            <person name="Chen H.-J."/>
            <person name="Shen A.B.-T."/>
            <person name="Li J.-C."/>
            <person name="Su T.-L."/>
            <person name="Shao C.-P."/>
            <person name="Lee C.-T."/>
            <person name="Hor L.-I."/>
            <person name="Tsai S.-F."/>
        </authorList>
    </citation>
    <scope>NUCLEOTIDE SEQUENCE [LARGE SCALE GENOMIC DNA]</scope>
    <source>
        <strain>YJ016</strain>
    </source>
</reference>
<name>USPB_VIBVY</name>
<feature type="chain" id="PRO_0000212053" description="Universal stress protein B homolog">
    <location>
        <begin position="1"/>
        <end position="107"/>
    </location>
</feature>
<feature type="transmembrane region" description="Helical" evidence="1">
    <location>
        <begin position="6"/>
        <end position="26"/>
    </location>
</feature>
<feature type="transmembrane region" description="Helical" evidence="1">
    <location>
        <begin position="86"/>
        <end position="106"/>
    </location>
</feature>
<dbReference type="EMBL" id="BA000037">
    <property type="protein sequence ID" value="BAC92840.1"/>
    <property type="molecule type" value="Genomic_DNA"/>
</dbReference>
<dbReference type="RefSeq" id="WP_011079133.1">
    <property type="nucleotide sequence ID" value="NC_005139.1"/>
</dbReference>
<dbReference type="STRING" id="672.VV93_v1c00680"/>
<dbReference type="GeneID" id="93895396"/>
<dbReference type="KEGG" id="vvy:VV0076"/>
<dbReference type="eggNOG" id="ENOG502ZP3V">
    <property type="taxonomic scope" value="Bacteria"/>
</dbReference>
<dbReference type="HOGENOM" id="CLU_151816_0_0_6"/>
<dbReference type="Proteomes" id="UP000002675">
    <property type="component" value="Chromosome I"/>
</dbReference>
<dbReference type="GO" id="GO:0005886">
    <property type="term" value="C:plasma membrane"/>
    <property type="evidence" value="ECO:0007669"/>
    <property type="project" value="UniProtKB-SubCell"/>
</dbReference>
<dbReference type="HAMAP" id="MF_01088">
    <property type="entry name" value="UspB"/>
    <property type="match status" value="1"/>
</dbReference>
<dbReference type="InterPro" id="IPR019598">
    <property type="entry name" value="Universal_stress_protein_B"/>
</dbReference>
<dbReference type="NCBIfam" id="NF003435">
    <property type="entry name" value="PRK04960.1"/>
    <property type="match status" value="1"/>
</dbReference>
<dbReference type="Pfam" id="PF10625">
    <property type="entry name" value="UspB"/>
    <property type="match status" value="1"/>
</dbReference>
<proteinExistence type="inferred from homology"/>
<organism>
    <name type="scientific">Vibrio vulnificus (strain YJ016)</name>
    <dbReference type="NCBI Taxonomy" id="196600"/>
    <lineage>
        <taxon>Bacteria</taxon>
        <taxon>Pseudomonadati</taxon>
        <taxon>Pseudomonadota</taxon>
        <taxon>Gammaproteobacteria</taxon>
        <taxon>Vibrionales</taxon>
        <taxon>Vibrionaceae</taxon>
        <taxon>Vibrio</taxon>
    </lineage>
</organism>
<comment type="subcellular location">
    <subcellularLocation>
        <location evidence="1">Cell inner membrane</location>
        <topology evidence="1">Multi-pass membrane protein</topology>
    </subcellularLocation>
</comment>
<comment type="similarity">
    <text evidence="1">Belongs to the universal stress protein B family.</text>
</comment>
<evidence type="ECO:0000255" key="1">
    <source>
        <dbReference type="HAMAP-Rule" id="MF_01088"/>
    </source>
</evidence>
<protein>
    <recommendedName>
        <fullName evidence="1">Universal stress protein B homolog</fullName>
    </recommendedName>
</protein>
<accession>Q7MQD2</accession>
<gene>
    <name evidence="1" type="primary">uspB</name>
    <name type="ordered locus">VV0076</name>
</gene>
<sequence length="107" mass="12264">MINGDIILFALMVVTGVNLARYLTALRSLIYIMREAHPLLYQQVDGNGFFTTHGNVTKQVRLYHYLKSKEYHHHHDEVFTGKCDRVRELFVLSVSLTGVTLLAAFLL</sequence>